<accession>A4SDC2</accession>
<sequence>MSQISAKDVKDLRDTTGVGMMDCKKALEETGGDMQKAVEYLRKKGAALAAKRAEKDASEGMICIKVAEDRKAGVILELNCETDFVARGEVFTGFAGALGQLALEGSAASAGALLGMTLSAEFGGEKVEDAIKTMTGKLGEKIELKRLVFCDAADGLVEAYVHPGAQLGAIIHIASAQPDSARELARDLAMQVAAAAPIVVDRSAVPEELIAKESDIYRQQALGQGKKEEFVDRIVQGRIEKYYQEVVLTEQAFIKVNNMKVSDVLGEFRKQHEAAVEIREFVRYQLGE</sequence>
<reference key="1">
    <citation type="submission" date="2007-03" db="EMBL/GenBank/DDBJ databases">
        <title>Complete sequence of Prosthecochloris vibrioformis DSM 265.</title>
        <authorList>
            <consortium name="US DOE Joint Genome Institute"/>
            <person name="Copeland A."/>
            <person name="Lucas S."/>
            <person name="Lapidus A."/>
            <person name="Barry K."/>
            <person name="Detter J.C."/>
            <person name="Glavina del Rio T."/>
            <person name="Hammon N."/>
            <person name="Israni S."/>
            <person name="Pitluck S."/>
            <person name="Schmutz J."/>
            <person name="Larimer F."/>
            <person name="Land M."/>
            <person name="Hauser L."/>
            <person name="Mikhailova N."/>
            <person name="Li T."/>
            <person name="Overmann J."/>
            <person name="Schuster S.C."/>
            <person name="Bryant D.A."/>
            <person name="Richardson P."/>
        </authorList>
    </citation>
    <scope>NUCLEOTIDE SEQUENCE [LARGE SCALE GENOMIC DNA]</scope>
    <source>
        <strain>DSM 265 / 1930</strain>
    </source>
</reference>
<comment type="function">
    <text evidence="1">Associates with the EF-Tu.GDP complex and induces the exchange of GDP to GTP. It remains bound to the aminoacyl-tRNA.EF-Tu.GTP complex up to the GTP hydrolysis stage on the ribosome.</text>
</comment>
<comment type="subcellular location">
    <subcellularLocation>
        <location evidence="1">Cytoplasm</location>
    </subcellularLocation>
</comment>
<comment type="similarity">
    <text evidence="1">Belongs to the EF-Ts family.</text>
</comment>
<keyword id="KW-0963">Cytoplasm</keyword>
<keyword id="KW-0251">Elongation factor</keyword>
<keyword id="KW-0648">Protein biosynthesis</keyword>
<feature type="chain" id="PRO_1000074873" description="Elongation factor Ts">
    <location>
        <begin position="1"/>
        <end position="288"/>
    </location>
</feature>
<feature type="region of interest" description="Involved in Mg(2+) ion dislocation from EF-Tu" evidence="1">
    <location>
        <begin position="82"/>
        <end position="85"/>
    </location>
</feature>
<organism>
    <name type="scientific">Chlorobium phaeovibrioides (strain DSM 265 / 1930)</name>
    <name type="common">Prosthecochloris vibrioformis (strain DSM 265)</name>
    <dbReference type="NCBI Taxonomy" id="290318"/>
    <lineage>
        <taxon>Bacteria</taxon>
        <taxon>Pseudomonadati</taxon>
        <taxon>Chlorobiota</taxon>
        <taxon>Chlorobiia</taxon>
        <taxon>Chlorobiales</taxon>
        <taxon>Chlorobiaceae</taxon>
        <taxon>Chlorobium/Pelodictyon group</taxon>
        <taxon>Chlorobium</taxon>
    </lineage>
</organism>
<name>EFTS_CHLPM</name>
<proteinExistence type="inferred from homology"/>
<dbReference type="EMBL" id="CP000607">
    <property type="protein sequence ID" value="ABP36481.1"/>
    <property type="molecule type" value="Genomic_DNA"/>
</dbReference>
<dbReference type="SMR" id="A4SDC2"/>
<dbReference type="STRING" id="290318.Cvib_0459"/>
<dbReference type="KEGG" id="pvi:Cvib_0459"/>
<dbReference type="eggNOG" id="COG0264">
    <property type="taxonomic scope" value="Bacteria"/>
</dbReference>
<dbReference type="HOGENOM" id="CLU_047155_0_0_10"/>
<dbReference type="OrthoDB" id="9808348at2"/>
<dbReference type="GO" id="GO:0005737">
    <property type="term" value="C:cytoplasm"/>
    <property type="evidence" value="ECO:0007669"/>
    <property type="project" value="UniProtKB-SubCell"/>
</dbReference>
<dbReference type="GO" id="GO:0003746">
    <property type="term" value="F:translation elongation factor activity"/>
    <property type="evidence" value="ECO:0007669"/>
    <property type="project" value="UniProtKB-UniRule"/>
</dbReference>
<dbReference type="CDD" id="cd14275">
    <property type="entry name" value="UBA_EF-Ts"/>
    <property type="match status" value="1"/>
</dbReference>
<dbReference type="FunFam" id="1.10.286.20:FF:000001">
    <property type="entry name" value="Elongation factor Ts"/>
    <property type="match status" value="1"/>
</dbReference>
<dbReference type="FunFam" id="1.10.8.10:FF:000001">
    <property type="entry name" value="Elongation factor Ts"/>
    <property type="match status" value="1"/>
</dbReference>
<dbReference type="Gene3D" id="1.10.286.20">
    <property type="match status" value="1"/>
</dbReference>
<dbReference type="Gene3D" id="1.10.8.10">
    <property type="entry name" value="DNA helicase RuvA subunit, C-terminal domain"/>
    <property type="match status" value="1"/>
</dbReference>
<dbReference type="Gene3D" id="3.30.479.20">
    <property type="entry name" value="Elongation factor Ts, dimerisation domain"/>
    <property type="match status" value="2"/>
</dbReference>
<dbReference type="HAMAP" id="MF_00050">
    <property type="entry name" value="EF_Ts"/>
    <property type="match status" value="1"/>
</dbReference>
<dbReference type="InterPro" id="IPR036402">
    <property type="entry name" value="EF-Ts_dimer_sf"/>
</dbReference>
<dbReference type="InterPro" id="IPR001816">
    <property type="entry name" value="Transl_elong_EFTs/EF1B"/>
</dbReference>
<dbReference type="InterPro" id="IPR014039">
    <property type="entry name" value="Transl_elong_EFTs/EF1B_dimer"/>
</dbReference>
<dbReference type="InterPro" id="IPR018101">
    <property type="entry name" value="Transl_elong_Ts_CS"/>
</dbReference>
<dbReference type="InterPro" id="IPR009060">
    <property type="entry name" value="UBA-like_sf"/>
</dbReference>
<dbReference type="NCBIfam" id="TIGR00116">
    <property type="entry name" value="tsf"/>
    <property type="match status" value="1"/>
</dbReference>
<dbReference type="PANTHER" id="PTHR11741">
    <property type="entry name" value="ELONGATION FACTOR TS"/>
    <property type="match status" value="1"/>
</dbReference>
<dbReference type="PANTHER" id="PTHR11741:SF0">
    <property type="entry name" value="ELONGATION FACTOR TS, MITOCHONDRIAL"/>
    <property type="match status" value="1"/>
</dbReference>
<dbReference type="Pfam" id="PF00889">
    <property type="entry name" value="EF_TS"/>
    <property type="match status" value="1"/>
</dbReference>
<dbReference type="SUPFAM" id="SSF54713">
    <property type="entry name" value="Elongation factor Ts (EF-Ts), dimerisation domain"/>
    <property type="match status" value="2"/>
</dbReference>
<dbReference type="SUPFAM" id="SSF46934">
    <property type="entry name" value="UBA-like"/>
    <property type="match status" value="1"/>
</dbReference>
<dbReference type="PROSITE" id="PS01126">
    <property type="entry name" value="EF_TS_1"/>
    <property type="match status" value="1"/>
</dbReference>
<dbReference type="PROSITE" id="PS01127">
    <property type="entry name" value="EF_TS_2"/>
    <property type="match status" value="1"/>
</dbReference>
<protein>
    <recommendedName>
        <fullName evidence="1">Elongation factor Ts</fullName>
        <shortName evidence="1">EF-Ts</shortName>
    </recommendedName>
</protein>
<evidence type="ECO:0000255" key="1">
    <source>
        <dbReference type="HAMAP-Rule" id="MF_00050"/>
    </source>
</evidence>
<gene>
    <name evidence="1" type="primary">tsf</name>
    <name type="ordered locus">Cvib_0459</name>
</gene>